<gene>
    <name evidence="1" type="primary">nuoK</name>
    <name type="ordered locus">E2348C_2419</name>
</gene>
<organism>
    <name type="scientific">Escherichia coli O127:H6 (strain E2348/69 / EPEC)</name>
    <dbReference type="NCBI Taxonomy" id="574521"/>
    <lineage>
        <taxon>Bacteria</taxon>
        <taxon>Pseudomonadati</taxon>
        <taxon>Pseudomonadota</taxon>
        <taxon>Gammaproteobacteria</taxon>
        <taxon>Enterobacterales</taxon>
        <taxon>Enterobacteriaceae</taxon>
        <taxon>Escherichia</taxon>
    </lineage>
</organism>
<accession>B7UFT7</accession>
<keyword id="KW-0997">Cell inner membrane</keyword>
<keyword id="KW-1003">Cell membrane</keyword>
<keyword id="KW-0472">Membrane</keyword>
<keyword id="KW-0520">NAD</keyword>
<keyword id="KW-0874">Quinone</keyword>
<keyword id="KW-1185">Reference proteome</keyword>
<keyword id="KW-1278">Translocase</keyword>
<keyword id="KW-0812">Transmembrane</keyword>
<keyword id="KW-1133">Transmembrane helix</keyword>
<keyword id="KW-0813">Transport</keyword>
<keyword id="KW-0830">Ubiquinone</keyword>
<name>NUOK_ECO27</name>
<feature type="chain" id="PRO_0000390049" description="NADH-quinone oxidoreductase subunit K">
    <location>
        <begin position="1"/>
        <end position="100"/>
    </location>
</feature>
<feature type="transmembrane region" description="Helical" evidence="1">
    <location>
        <begin position="4"/>
        <end position="24"/>
    </location>
</feature>
<feature type="transmembrane region" description="Helical" evidence="1">
    <location>
        <begin position="28"/>
        <end position="48"/>
    </location>
</feature>
<feature type="transmembrane region" description="Helical" evidence="1">
    <location>
        <begin position="60"/>
        <end position="80"/>
    </location>
</feature>
<sequence>MIPLQHGLILAAILFVLGLTGLVIRRNLLFMLIGLEIMINASALAFVVAGSYWGQTDGQVMYILAISLAAAEASIGLALLLQLHRRRQNLNIDSVSEMRG</sequence>
<dbReference type="EC" id="7.1.1.-" evidence="1"/>
<dbReference type="EMBL" id="FM180568">
    <property type="protein sequence ID" value="CAS09967.1"/>
    <property type="molecule type" value="Genomic_DNA"/>
</dbReference>
<dbReference type="RefSeq" id="WP_000612644.1">
    <property type="nucleotide sequence ID" value="NC_011601.1"/>
</dbReference>
<dbReference type="SMR" id="B7UFT7"/>
<dbReference type="GeneID" id="93033872"/>
<dbReference type="KEGG" id="ecg:E2348C_2419"/>
<dbReference type="HOGENOM" id="CLU_144724_0_1_6"/>
<dbReference type="Proteomes" id="UP000008205">
    <property type="component" value="Chromosome"/>
</dbReference>
<dbReference type="GO" id="GO:0030964">
    <property type="term" value="C:NADH dehydrogenase complex"/>
    <property type="evidence" value="ECO:0007669"/>
    <property type="project" value="TreeGrafter"/>
</dbReference>
<dbReference type="GO" id="GO:0005886">
    <property type="term" value="C:plasma membrane"/>
    <property type="evidence" value="ECO:0007669"/>
    <property type="project" value="UniProtKB-SubCell"/>
</dbReference>
<dbReference type="GO" id="GO:0050136">
    <property type="term" value="F:NADH:ubiquinone reductase (non-electrogenic) activity"/>
    <property type="evidence" value="ECO:0007669"/>
    <property type="project" value="UniProtKB-UniRule"/>
</dbReference>
<dbReference type="GO" id="GO:0048038">
    <property type="term" value="F:quinone binding"/>
    <property type="evidence" value="ECO:0007669"/>
    <property type="project" value="UniProtKB-KW"/>
</dbReference>
<dbReference type="GO" id="GO:0042773">
    <property type="term" value="P:ATP synthesis coupled electron transport"/>
    <property type="evidence" value="ECO:0007669"/>
    <property type="project" value="InterPro"/>
</dbReference>
<dbReference type="FunFam" id="1.10.287.3510:FF:000001">
    <property type="entry name" value="NADH-quinone oxidoreductase subunit K"/>
    <property type="match status" value="1"/>
</dbReference>
<dbReference type="Gene3D" id="1.10.287.3510">
    <property type="match status" value="1"/>
</dbReference>
<dbReference type="HAMAP" id="MF_01456">
    <property type="entry name" value="NDH1_NuoK"/>
    <property type="match status" value="1"/>
</dbReference>
<dbReference type="InterPro" id="IPR001133">
    <property type="entry name" value="NADH_UbQ_OxRdtase_chain4L/K"/>
</dbReference>
<dbReference type="InterPro" id="IPR039428">
    <property type="entry name" value="NUOK/Mnh_C1-like"/>
</dbReference>
<dbReference type="NCBIfam" id="NF004319">
    <property type="entry name" value="PRK05715.1-1"/>
    <property type="match status" value="1"/>
</dbReference>
<dbReference type="NCBIfam" id="NF004320">
    <property type="entry name" value="PRK05715.1-2"/>
    <property type="match status" value="1"/>
</dbReference>
<dbReference type="PANTHER" id="PTHR11434:SF16">
    <property type="entry name" value="NADH-UBIQUINONE OXIDOREDUCTASE CHAIN 4L"/>
    <property type="match status" value="1"/>
</dbReference>
<dbReference type="PANTHER" id="PTHR11434">
    <property type="entry name" value="NADH-UBIQUINONE OXIDOREDUCTASE SUBUNIT ND4L"/>
    <property type="match status" value="1"/>
</dbReference>
<dbReference type="Pfam" id="PF00420">
    <property type="entry name" value="Oxidored_q2"/>
    <property type="match status" value="1"/>
</dbReference>
<protein>
    <recommendedName>
        <fullName evidence="1">NADH-quinone oxidoreductase subunit K</fullName>
        <ecNumber evidence="1">7.1.1.-</ecNumber>
    </recommendedName>
    <alternativeName>
        <fullName evidence="1">NADH dehydrogenase I subunit K</fullName>
    </alternativeName>
    <alternativeName>
        <fullName evidence="1">NDH-1 subunit K</fullName>
    </alternativeName>
</protein>
<evidence type="ECO:0000255" key="1">
    <source>
        <dbReference type="HAMAP-Rule" id="MF_01456"/>
    </source>
</evidence>
<proteinExistence type="inferred from homology"/>
<comment type="function">
    <text evidence="1">NDH-1 shuttles electrons from NADH, via FMN and iron-sulfur (Fe-S) centers, to quinones in the respiratory chain. The immediate electron acceptor for the enzyme in this species is believed to be ubiquinone. Couples the redox reaction to proton translocation (for every two electrons transferred, four hydrogen ions are translocated across the cytoplasmic membrane), and thus conserves the redox energy in a proton gradient.</text>
</comment>
<comment type="catalytic activity">
    <reaction evidence="1">
        <text>a quinone + NADH + 5 H(+)(in) = a quinol + NAD(+) + 4 H(+)(out)</text>
        <dbReference type="Rhea" id="RHEA:57888"/>
        <dbReference type="ChEBI" id="CHEBI:15378"/>
        <dbReference type="ChEBI" id="CHEBI:24646"/>
        <dbReference type="ChEBI" id="CHEBI:57540"/>
        <dbReference type="ChEBI" id="CHEBI:57945"/>
        <dbReference type="ChEBI" id="CHEBI:132124"/>
    </reaction>
</comment>
<comment type="subunit">
    <text evidence="1">NDH-1 is composed of 13 different subunits. Subunits NuoA, H, J, K, L, M, N constitute the membrane sector of the complex.</text>
</comment>
<comment type="subcellular location">
    <subcellularLocation>
        <location evidence="1">Cell inner membrane</location>
        <topology evidence="1">Multi-pass membrane protein</topology>
    </subcellularLocation>
</comment>
<comment type="similarity">
    <text evidence="1">Belongs to the complex I subunit 4L family.</text>
</comment>
<reference key="1">
    <citation type="journal article" date="2009" name="J. Bacteriol.">
        <title>Complete genome sequence and comparative genome analysis of enteropathogenic Escherichia coli O127:H6 strain E2348/69.</title>
        <authorList>
            <person name="Iguchi A."/>
            <person name="Thomson N.R."/>
            <person name="Ogura Y."/>
            <person name="Saunders D."/>
            <person name="Ooka T."/>
            <person name="Henderson I.R."/>
            <person name="Harris D."/>
            <person name="Asadulghani M."/>
            <person name="Kurokawa K."/>
            <person name="Dean P."/>
            <person name="Kenny B."/>
            <person name="Quail M.A."/>
            <person name="Thurston S."/>
            <person name="Dougan G."/>
            <person name="Hayashi T."/>
            <person name="Parkhill J."/>
            <person name="Frankel G."/>
        </authorList>
    </citation>
    <scope>NUCLEOTIDE SEQUENCE [LARGE SCALE GENOMIC DNA]</scope>
    <source>
        <strain>E2348/69 / EPEC</strain>
    </source>
</reference>